<dbReference type="EMBL" id="AP006840">
    <property type="protein sequence ID" value="BAD39174.1"/>
    <property type="molecule type" value="Genomic_DNA"/>
</dbReference>
<dbReference type="RefSeq" id="WP_011194324.1">
    <property type="nucleotide sequence ID" value="NC_006177.1"/>
</dbReference>
<dbReference type="SMR" id="Q67T19"/>
<dbReference type="STRING" id="292459.STH189"/>
<dbReference type="DNASU" id="2979884"/>
<dbReference type="KEGG" id="sth:STH189"/>
<dbReference type="eggNOG" id="COG1481">
    <property type="taxonomic scope" value="Bacteria"/>
</dbReference>
<dbReference type="HOGENOM" id="CLU_053282_0_0_9"/>
<dbReference type="OrthoDB" id="401278at2"/>
<dbReference type="Proteomes" id="UP000000417">
    <property type="component" value="Chromosome"/>
</dbReference>
<dbReference type="GO" id="GO:0003677">
    <property type="term" value="F:DNA binding"/>
    <property type="evidence" value="ECO:0007669"/>
    <property type="project" value="UniProtKB-UniRule"/>
</dbReference>
<dbReference type="GO" id="GO:0004519">
    <property type="term" value="F:endonuclease activity"/>
    <property type="evidence" value="ECO:0007669"/>
    <property type="project" value="InterPro"/>
</dbReference>
<dbReference type="GO" id="GO:0051301">
    <property type="term" value="P:cell division"/>
    <property type="evidence" value="ECO:0007669"/>
    <property type="project" value="UniProtKB-UniRule"/>
</dbReference>
<dbReference type="GO" id="GO:0043937">
    <property type="term" value="P:regulation of sporulation"/>
    <property type="evidence" value="ECO:0007669"/>
    <property type="project" value="InterPro"/>
</dbReference>
<dbReference type="Gene3D" id="3.10.28.10">
    <property type="entry name" value="Homing endonucleases"/>
    <property type="match status" value="1"/>
</dbReference>
<dbReference type="HAMAP" id="MF_01420">
    <property type="entry name" value="HTH_type_WhiA"/>
    <property type="match status" value="1"/>
</dbReference>
<dbReference type="InterPro" id="IPR027434">
    <property type="entry name" value="Homing_endonucl"/>
</dbReference>
<dbReference type="InterPro" id="IPR004042">
    <property type="entry name" value="Intein_endonuc_central"/>
</dbReference>
<dbReference type="InterPro" id="IPR018478">
    <property type="entry name" value="Sporu_reg_WhiA_N_dom"/>
</dbReference>
<dbReference type="InterPro" id="IPR003802">
    <property type="entry name" value="Sporulation_regulator_WhiA"/>
</dbReference>
<dbReference type="InterPro" id="IPR023054">
    <property type="entry name" value="Sporulation_regulator_WhiA_C"/>
</dbReference>
<dbReference type="InterPro" id="IPR039518">
    <property type="entry name" value="WhiA_LAGLIDADG_dom"/>
</dbReference>
<dbReference type="NCBIfam" id="TIGR00647">
    <property type="entry name" value="DNA_bind_WhiA"/>
    <property type="match status" value="1"/>
</dbReference>
<dbReference type="PANTHER" id="PTHR37307">
    <property type="entry name" value="CELL DIVISION PROTEIN WHIA-RELATED"/>
    <property type="match status" value="1"/>
</dbReference>
<dbReference type="PANTHER" id="PTHR37307:SF1">
    <property type="entry name" value="CELL DIVISION PROTEIN WHIA-RELATED"/>
    <property type="match status" value="1"/>
</dbReference>
<dbReference type="Pfam" id="PF02650">
    <property type="entry name" value="HTH_WhiA"/>
    <property type="match status" value="1"/>
</dbReference>
<dbReference type="Pfam" id="PF14527">
    <property type="entry name" value="LAGLIDADG_WhiA"/>
    <property type="match status" value="1"/>
</dbReference>
<dbReference type="Pfam" id="PF10298">
    <property type="entry name" value="WhiA_N"/>
    <property type="match status" value="1"/>
</dbReference>
<dbReference type="SUPFAM" id="SSF55608">
    <property type="entry name" value="Homing endonucleases"/>
    <property type="match status" value="1"/>
</dbReference>
<dbReference type="PROSITE" id="PS50819">
    <property type="entry name" value="INTEIN_ENDONUCLEASE"/>
    <property type="match status" value="1"/>
</dbReference>
<name>WHIA_SYMTH</name>
<protein>
    <recommendedName>
        <fullName evidence="1">Probable cell division protein WhiA</fullName>
    </recommendedName>
</protein>
<feature type="chain" id="PRO_0000376602" description="Probable cell division protein WhiA">
    <location>
        <begin position="1"/>
        <end position="314"/>
    </location>
</feature>
<feature type="DNA-binding region" description="H-T-H motif" evidence="1">
    <location>
        <begin position="282"/>
        <end position="314"/>
    </location>
</feature>
<keyword id="KW-0131">Cell cycle</keyword>
<keyword id="KW-0132">Cell division</keyword>
<keyword id="KW-0238">DNA-binding</keyword>
<keyword id="KW-1185">Reference proteome</keyword>
<proteinExistence type="inferred from homology"/>
<accession>Q67T19</accession>
<sequence length="314" mass="34851">MSEELSFSAMVKAELALLTPELPCCRRMELAGLVRALGRLELSGRGRFALTLSTDSAPVSRKVIRLLKSVSPVRYEVMVMRRRKLRKNLVYRVHIPHQPGVAELLQLAGFIDEAGRPADWVEPPELANDHCRRAFLRGTFLGSGWVAGPEKQHHLEITTTATEAADALGQMLFRGGIAARMVARRESLVLYIKEADQIIRFLGLVGAHQALLRYEEVRVIKEMKNQVNRQVNAEVANMTKQADAAARQVEAIKRLEAAGALERVSPPLRELAGLRLAYPDASLKELGELCRPPVSKSGAAHRMRQLMALAESLE</sequence>
<comment type="function">
    <text evidence="1">Involved in cell division and chromosome segregation.</text>
</comment>
<comment type="similarity">
    <text evidence="1">Belongs to the WhiA family.</text>
</comment>
<organism>
    <name type="scientific">Symbiobacterium thermophilum (strain DSM 24528 / JCM 14929 / IAM 14863 / T)</name>
    <dbReference type="NCBI Taxonomy" id="292459"/>
    <lineage>
        <taxon>Bacteria</taxon>
        <taxon>Bacillati</taxon>
        <taxon>Bacillota</taxon>
        <taxon>Clostridia</taxon>
        <taxon>Eubacteriales</taxon>
        <taxon>Symbiobacteriaceae</taxon>
        <taxon>Symbiobacterium</taxon>
    </lineage>
</organism>
<evidence type="ECO:0000255" key="1">
    <source>
        <dbReference type="HAMAP-Rule" id="MF_01420"/>
    </source>
</evidence>
<reference key="1">
    <citation type="journal article" date="2004" name="Nucleic Acids Res.">
        <title>Genome sequence of Symbiobacterium thermophilum, an uncultivable bacterium that depends on microbial commensalism.</title>
        <authorList>
            <person name="Ueda K."/>
            <person name="Yamashita A."/>
            <person name="Ishikawa J."/>
            <person name="Shimada M."/>
            <person name="Watsuji T."/>
            <person name="Morimura K."/>
            <person name="Ikeda H."/>
            <person name="Hattori M."/>
            <person name="Beppu T."/>
        </authorList>
    </citation>
    <scope>NUCLEOTIDE SEQUENCE [LARGE SCALE GENOMIC DNA]</scope>
    <source>
        <strain>DSM 24528 / JCM 14929 / IAM 14863 / T</strain>
    </source>
</reference>
<gene>
    <name evidence="1" type="primary">whiA</name>
    <name type="ordered locus">STH189</name>
</gene>